<dbReference type="EMBL" id="AE009439">
    <property type="protein sequence ID" value="AAM02176.1"/>
    <property type="molecule type" value="Genomic_DNA"/>
</dbReference>
<dbReference type="RefSeq" id="WP_011019331.1">
    <property type="nucleotide sequence ID" value="NC_003551.1"/>
</dbReference>
<dbReference type="SMR" id="Q8TWR9"/>
<dbReference type="FunCoup" id="Q8TWR9">
    <property type="interactions" value="97"/>
</dbReference>
<dbReference type="STRING" id="190192.MK0963"/>
<dbReference type="PaxDb" id="190192-MK0963"/>
<dbReference type="EnsemblBacteria" id="AAM02176">
    <property type="protein sequence ID" value="AAM02176"/>
    <property type="gene ID" value="MK0963"/>
</dbReference>
<dbReference type="GeneID" id="1477064"/>
<dbReference type="KEGG" id="mka:MK0963"/>
<dbReference type="PATRIC" id="fig|190192.8.peg.1008"/>
<dbReference type="HOGENOM" id="CLU_038085_2_0_2"/>
<dbReference type="InParanoid" id="Q8TWR9"/>
<dbReference type="OrthoDB" id="372162at2157"/>
<dbReference type="Proteomes" id="UP000001826">
    <property type="component" value="Chromosome"/>
</dbReference>
<dbReference type="CDD" id="cd07361">
    <property type="entry name" value="MEMO_like"/>
    <property type="match status" value="1"/>
</dbReference>
<dbReference type="Gene3D" id="3.40.830.10">
    <property type="entry name" value="LigB-like"/>
    <property type="match status" value="1"/>
</dbReference>
<dbReference type="HAMAP" id="MF_00055">
    <property type="entry name" value="MEMO1"/>
    <property type="match status" value="1"/>
</dbReference>
<dbReference type="InterPro" id="IPR002737">
    <property type="entry name" value="MEMO1_fam"/>
</dbReference>
<dbReference type="NCBIfam" id="TIGR04336">
    <property type="entry name" value="AmmeMemoSam_B"/>
    <property type="match status" value="1"/>
</dbReference>
<dbReference type="NCBIfam" id="NF001987">
    <property type="entry name" value="PRK00782.1"/>
    <property type="match status" value="1"/>
</dbReference>
<dbReference type="PANTHER" id="PTHR11060">
    <property type="entry name" value="PROTEIN MEMO1"/>
    <property type="match status" value="1"/>
</dbReference>
<dbReference type="PANTHER" id="PTHR11060:SF0">
    <property type="entry name" value="PROTEIN MEMO1"/>
    <property type="match status" value="1"/>
</dbReference>
<dbReference type="Pfam" id="PF01875">
    <property type="entry name" value="Memo"/>
    <property type="match status" value="1"/>
</dbReference>
<dbReference type="SUPFAM" id="SSF53213">
    <property type="entry name" value="LigB-like"/>
    <property type="match status" value="1"/>
</dbReference>
<keyword id="KW-1185">Reference proteome</keyword>
<protein>
    <recommendedName>
        <fullName evidence="1">MEMO1 family protein MK0963</fullName>
    </recommendedName>
</protein>
<feature type="chain" id="PRO_0000134380" description="MEMO1 family protein MK0963">
    <location>
        <begin position="1"/>
        <end position="283"/>
    </location>
</feature>
<accession>Q8TWR9</accession>
<gene>
    <name type="ordered locus">MK0963</name>
</gene>
<organism>
    <name type="scientific">Methanopyrus kandleri (strain AV19 / DSM 6324 / JCM 9639 / NBRC 100938)</name>
    <dbReference type="NCBI Taxonomy" id="190192"/>
    <lineage>
        <taxon>Archaea</taxon>
        <taxon>Methanobacteriati</taxon>
        <taxon>Methanobacteriota</taxon>
        <taxon>Methanomada group</taxon>
        <taxon>Methanopyri</taxon>
        <taxon>Methanopyrales</taxon>
        <taxon>Methanopyraceae</taxon>
        <taxon>Methanopyrus</taxon>
    </lineage>
</organism>
<reference key="1">
    <citation type="journal article" date="2002" name="Proc. Natl. Acad. Sci. U.S.A.">
        <title>The complete genome of hyperthermophile Methanopyrus kandleri AV19 and monophyly of archaeal methanogens.</title>
        <authorList>
            <person name="Slesarev A.I."/>
            <person name="Mezhevaya K.V."/>
            <person name="Makarova K.S."/>
            <person name="Polushin N.N."/>
            <person name="Shcherbinina O.V."/>
            <person name="Shakhova V.V."/>
            <person name="Belova G.I."/>
            <person name="Aravind L."/>
            <person name="Natale D.A."/>
            <person name="Rogozin I.B."/>
            <person name="Tatusov R.L."/>
            <person name="Wolf Y.I."/>
            <person name="Stetter K.O."/>
            <person name="Malykh A.G."/>
            <person name="Koonin E.V."/>
            <person name="Kozyavkin S.A."/>
        </authorList>
    </citation>
    <scope>NUCLEOTIDE SEQUENCE [LARGE SCALE GENOMIC DNA]</scope>
    <source>
        <strain>AV19 / DSM 6324 / JCM 9639 / NBRC 100938</strain>
    </source>
</reference>
<evidence type="ECO:0000255" key="1">
    <source>
        <dbReference type="HAMAP-Rule" id="MF_00055"/>
    </source>
</evidence>
<sequence>MERSPAVAGQFYPADPEELRKMIEWCFRHELGPGDLPETNDGPCTLPGVVAPHAGYQFSGPVAAHTYKVLAESGTPETVVILGPNHTGLGSAVATMTDGAWRTPLGSVEIDSEFATALVRKCGVMDDDLTAHANEHSIEVQLPFLQYVYGESFRFVPVCMAMHDLQTAREVGEAIVDVAEELDRNTVVIASTDFTHYEPHDQAQKKDRKVIERITALDEAGMIEIVERYNVSMCGVGPTAATIVAVKAMGASEGELLKYATSGDVSGDYSQVVGYAAIVFRRG</sequence>
<proteinExistence type="inferred from homology"/>
<name>Y963_METKA</name>
<comment type="similarity">
    <text evidence="1">Belongs to the MEMO1 family.</text>
</comment>